<sequence length="334" mass="35833">MNTEATHDQNEAQTTGVRLRNAREQLGLSQQAVAERLCLKVSTVRDIEEDKAPSDLASTFLRGYIRSYARLVHVPEEELLPGLEKQAPLRAAKVAPMQSFSLGKRRKKRDGWLMSFTWLVLFVVVGLTGAWWWQNHKAQQEEITTMADQSTAELNADKDSGQNVPLDTRDATSQDTTPAQTAPAPATPVDSTAATQTPAATATATQNTVVAPSQANVDTAATSAAPAATETPSALPTSQAGVAAPAADPNALVMNFTADCWLEVTDATGKKLFSGMQRKDGNLNLTGQAPYKLKIGAPAAVQIQYQGKPVDLSRFIRTNQVARLTLNAEPTPAQ</sequence>
<accession>B4TR96</accession>
<proteinExistence type="inferred from homology"/>
<dbReference type="EMBL" id="CP001127">
    <property type="protein sequence ID" value="ACF92274.1"/>
    <property type="molecule type" value="Genomic_DNA"/>
</dbReference>
<dbReference type="RefSeq" id="WP_001090883.1">
    <property type="nucleotide sequence ID" value="NC_011094.1"/>
</dbReference>
<dbReference type="SMR" id="B4TR96"/>
<dbReference type="KEGG" id="sew:SeSA_A2763"/>
<dbReference type="HOGENOM" id="CLU_047530_3_1_6"/>
<dbReference type="Proteomes" id="UP000001865">
    <property type="component" value="Chromosome"/>
</dbReference>
<dbReference type="GO" id="GO:0005886">
    <property type="term" value="C:plasma membrane"/>
    <property type="evidence" value="ECO:0007669"/>
    <property type="project" value="UniProtKB-SubCell"/>
</dbReference>
<dbReference type="GO" id="GO:0003677">
    <property type="term" value="F:DNA binding"/>
    <property type="evidence" value="ECO:0007669"/>
    <property type="project" value="UniProtKB-KW"/>
</dbReference>
<dbReference type="GO" id="GO:0008360">
    <property type="term" value="P:regulation of cell shape"/>
    <property type="evidence" value="ECO:0007669"/>
    <property type="project" value="UniProtKB-UniRule"/>
</dbReference>
<dbReference type="CDD" id="cd00093">
    <property type="entry name" value="HTH_XRE"/>
    <property type="match status" value="1"/>
</dbReference>
<dbReference type="FunFam" id="1.10.260.40:FF:000014">
    <property type="entry name" value="Cytoskeleton protein RodZ"/>
    <property type="match status" value="1"/>
</dbReference>
<dbReference type="Gene3D" id="1.10.260.40">
    <property type="entry name" value="lambda repressor-like DNA-binding domains"/>
    <property type="match status" value="1"/>
</dbReference>
<dbReference type="HAMAP" id="MF_02017">
    <property type="entry name" value="RodZ"/>
    <property type="match status" value="1"/>
</dbReference>
<dbReference type="InterPro" id="IPR050400">
    <property type="entry name" value="Bact_Cytoskel_RodZ"/>
</dbReference>
<dbReference type="InterPro" id="IPR001387">
    <property type="entry name" value="Cro/C1-type_HTH"/>
</dbReference>
<dbReference type="InterPro" id="IPR010982">
    <property type="entry name" value="Lambda_DNA-bd_dom_sf"/>
</dbReference>
<dbReference type="InterPro" id="IPR023690">
    <property type="entry name" value="RodZ"/>
</dbReference>
<dbReference type="InterPro" id="IPR025194">
    <property type="entry name" value="RodZ-like_C"/>
</dbReference>
<dbReference type="NCBIfam" id="NF008109">
    <property type="entry name" value="PRK10856.1"/>
    <property type="match status" value="1"/>
</dbReference>
<dbReference type="PANTHER" id="PTHR34475">
    <property type="match status" value="1"/>
</dbReference>
<dbReference type="PANTHER" id="PTHR34475:SF1">
    <property type="entry name" value="CYTOSKELETON PROTEIN RODZ"/>
    <property type="match status" value="1"/>
</dbReference>
<dbReference type="Pfam" id="PF13413">
    <property type="entry name" value="HTH_25"/>
    <property type="match status" value="1"/>
</dbReference>
<dbReference type="Pfam" id="PF13464">
    <property type="entry name" value="RodZ_C"/>
    <property type="match status" value="1"/>
</dbReference>
<dbReference type="SMART" id="SM00530">
    <property type="entry name" value="HTH_XRE"/>
    <property type="match status" value="1"/>
</dbReference>
<dbReference type="SUPFAM" id="SSF47413">
    <property type="entry name" value="lambda repressor-like DNA-binding domains"/>
    <property type="match status" value="1"/>
</dbReference>
<dbReference type="PROSITE" id="PS50943">
    <property type="entry name" value="HTH_CROC1"/>
    <property type="match status" value="1"/>
</dbReference>
<keyword id="KW-0997">Cell inner membrane</keyword>
<keyword id="KW-1003">Cell membrane</keyword>
<keyword id="KW-0133">Cell shape</keyword>
<keyword id="KW-0238">DNA-binding</keyword>
<keyword id="KW-0472">Membrane</keyword>
<keyword id="KW-0735">Signal-anchor</keyword>
<keyword id="KW-0812">Transmembrane</keyword>
<keyword id="KW-1133">Transmembrane helix</keyword>
<reference key="1">
    <citation type="journal article" date="2011" name="J. Bacteriol.">
        <title>Comparative genomics of 28 Salmonella enterica isolates: evidence for CRISPR-mediated adaptive sublineage evolution.</title>
        <authorList>
            <person name="Fricke W.F."/>
            <person name="Mammel M.K."/>
            <person name="McDermott P.F."/>
            <person name="Tartera C."/>
            <person name="White D.G."/>
            <person name="Leclerc J.E."/>
            <person name="Ravel J."/>
            <person name="Cebula T.A."/>
        </authorList>
    </citation>
    <scope>NUCLEOTIDE SEQUENCE [LARGE SCALE GENOMIC DNA]</scope>
    <source>
        <strain>CVM19633</strain>
    </source>
</reference>
<evidence type="ECO:0000255" key="1">
    <source>
        <dbReference type="HAMAP-Rule" id="MF_02017"/>
    </source>
</evidence>
<evidence type="ECO:0000256" key="2">
    <source>
        <dbReference type="SAM" id="MobiDB-lite"/>
    </source>
</evidence>
<name>RODZ_SALSV</name>
<comment type="function">
    <text evidence="1">Cytoskeletal protein that is involved in cell-shape control through regulation of the length of the long axis.</text>
</comment>
<comment type="subcellular location">
    <subcellularLocation>
        <location evidence="1">Cell inner membrane</location>
        <topology evidence="1">Single-pass type II membrane protein</topology>
    </subcellularLocation>
    <text evidence="1">Forms helical filaments along the long axis of the cell.</text>
</comment>
<comment type="domain">
    <text evidence="1">The helix-turn-helix (HTH) motif in the cytoplasmic domain of the N-terminus is involved in the formation of spirals to maintain the rigid rod shape. As this protein is anchored in the cytoplasmic membrane, the HTH motif may contribute to protein-protein interactions to form the RodZ helix, which is localized beneath the cytoplasmic membrane. The C-terminal domain may be critical for determination of the rod shape by probably interacting with enzymes required for synthesis of the peptidoglycan layer, including PBPs in the periplasm.</text>
</comment>
<comment type="similarity">
    <text evidence="1">Belongs to the RodZ family.</text>
</comment>
<feature type="chain" id="PRO_0000361858" description="Cytoskeleton protein RodZ">
    <location>
        <begin position="1"/>
        <end position="334"/>
    </location>
</feature>
<feature type="topological domain" description="Cytoplasmic" evidence="1">
    <location>
        <begin position="1"/>
        <end position="111"/>
    </location>
</feature>
<feature type="transmembrane region" description="Helical; Signal-anchor for type II membrane protein" evidence="1">
    <location>
        <begin position="112"/>
        <end position="132"/>
    </location>
</feature>
<feature type="topological domain" description="Periplasmic" evidence="1">
    <location>
        <begin position="133"/>
        <end position="334"/>
    </location>
</feature>
<feature type="domain" description="HTH cro/C1-type" evidence="1">
    <location>
        <begin position="19"/>
        <end position="71"/>
    </location>
</feature>
<feature type="DNA-binding region" description="H-T-H motif" evidence="1">
    <location>
        <begin position="30"/>
        <end position="49"/>
    </location>
</feature>
<feature type="region of interest" description="Disordered" evidence="2">
    <location>
        <begin position="155"/>
        <end position="207"/>
    </location>
</feature>
<feature type="region of interest" description="Disordered" evidence="2">
    <location>
        <begin position="221"/>
        <end position="241"/>
    </location>
</feature>
<feature type="compositionally biased region" description="Low complexity" evidence="2">
    <location>
        <begin position="176"/>
        <end position="207"/>
    </location>
</feature>
<gene>
    <name evidence="1" type="primary">rodZ</name>
    <name type="ordered locus">SeSA_A2763</name>
</gene>
<protein>
    <recommendedName>
        <fullName evidence="1">Cytoskeleton protein RodZ</fullName>
    </recommendedName>
</protein>
<organism>
    <name type="scientific">Salmonella schwarzengrund (strain CVM19633)</name>
    <dbReference type="NCBI Taxonomy" id="439843"/>
    <lineage>
        <taxon>Bacteria</taxon>
        <taxon>Pseudomonadati</taxon>
        <taxon>Pseudomonadota</taxon>
        <taxon>Gammaproteobacteria</taxon>
        <taxon>Enterobacterales</taxon>
        <taxon>Enterobacteriaceae</taxon>
        <taxon>Salmonella</taxon>
    </lineage>
</organism>